<name>TIM16_DEBHA</name>
<feature type="chain" id="PRO_0000214091" description="Mitochondrial import inner membrane translocase subunit TIM16">
    <location>
        <begin position="1"/>
        <end position="128"/>
    </location>
</feature>
<feature type="region of interest" description="J-like">
    <location>
        <begin position="53"/>
        <end position="107"/>
    </location>
</feature>
<sequence>MAHRLLVNVIFTGASVFGRAFTEAYKQAAKATASTPQGGAAKSTSVGGIPTDEALKILDLKKTDLSVAKIDEKYAYLFDVNSKDKGNSFYLQSKVYYAMDSLRKELDYLDKLKKTKDGSQGEAGPTST</sequence>
<accession>Q6BXP3</accession>
<organism>
    <name type="scientific">Debaryomyces hansenii (strain ATCC 36239 / CBS 767 / BCRC 21394 / JCM 1990 / NBRC 0083 / IGC 2968)</name>
    <name type="common">Yeast</name>
    <name type="synonym">Torulaspora hansenii</name>
    <dbReference type="NCBI Taxonomy" id="284592"/>
    <lineage>
        <taxon>Eukaryota</taxon>
        <taxon>Fungi</taxon>
        <taxon>Dikarya</taxon>
        <taxon>Ascomycota</taxon>
        <taxon>Saccharomycotina</taxon>
        <taxon>Pichiomycetes</taxon>
        <taxon>Debaryomycetaceae</taxon>
        <taxon>Debaryomyces</taxon>
    </lineage>
</organism>
<comment type="function">
    <text evidence="1">Essential component of the PAM complex, a complex required for the translocation of transit peptide-containing proteins from the inner membrane into the mitochondrial matrix in an ATP-dependent manner. In the complex, it is required to regulate activity of mtHSP70 (SSC1) via its interaction with PAM18/TIM14. May act by positioning PAM18/TIM14 in juxtaposition to mtHSP70 at the translocon to maximize ATPase stimulation (By similarity).</text>
</comment>
<comment type="subunit">
    <text evidence="1">Heterodimer with PAM18. Component of the PAM complex, at least composed of mtHsp70, MGE1, TIM44, PAM16, PAM17 and PAM18 (By similarity).</text>
</comment>
<comment type="subcellular location">
    <subcellularLocation>
        <location evidence="1">Mitochondrion inner membrane</location>
        <topology evidence="1">Peripheral membrane protein</topology>
    </subcellularLocation>
</comment>
<comment type="domain">
    <text evidence="1">The J-like region, although related to the J domain does not stimulate ATPase activity of mtHSP70. It nevertheless mediates the heterodimerization with the J domain of PAM18 and is therefore essential for PAM complex function (By similarity).</text>
</comment>
<comment type="similarity">
    <text evidence="2">Belongs to the TIM16/PAM16 family.</text>
</comment>
<evidence type="ECO:0000250" key="1"/>
<evidence type="ECO:0000305" key="2"/>
<dbReference type="EMBL" id="CR382134">
    <property type="protein sequence ID" value="CAG85011.2"/>
    <property type="molecule type" value="Genomic_DNA"/>
</dbReference>
<dbReference type="RefSeq" id="XP_457026.2">
    <property type="nucleotide sequence ID" value="XM_457026.1"/>
</dbReference>
<dbReference type="SMR" id="Q6BXP3"/>
<dbReference type="FunCoup" id="Q6BXP3">
    <property type="interactions" value="265"/>
</dbReference>
<dbReference type="STRING" id="284592.Q6BXP3"/>
<dbReference type="GeneID" id="2913731"/>
<dbReference type="KEGG" id="dha:DEHA2B01364g"/>
<dbReference type="VEuPathDB" id="FungiDB:DEHA2B01364g"/>
<dbReference type="eggNOG" id="KOG3442">
    <property type="taxonomic scope" value="Eukaryota"/>
</dbReference>
<dbReference type="HOGENOM" id="CLU_101461_0_1_1"/>
<dbReference type="InParanoid" id="Q6BXP3"/>
<dbReference type="OMA" id="RMFKIND"/>
<dbReference type="OrthoDB" id="10262892at2759"/>
<dbReference type="Proteomes" id="UP000000599">
    <property type="component" value="Chromosome B"/>
</dbReference>
<dbReference type="GO" id="GO:0001405">
    <property type="term" value="C:PAM complex, Tim23 associated import motor"/>
    <property type="evidence" value="ECO:0007669"/>
    <property type="project" value="EnsemblFungi"/>
</dbReference>
<dbReference type="GO" id="GO:0019904">
    <property type="term" value="F:protein domain specific binding"/>
    <property type="evidence" value="ECO:0007669"/>
    <property type="project" value="EnsemblFungi"/>
</dbReference>
<dbReference type="GO" id="GO:0030150">
    <property type="term" value="P:protein import into mitochondrial matrix"/>
    <property type="evidence" value="ECO:0007669"/>
    <property type="project" value="EnsemblFungi"/>
</dbReference>
<dbReference type="Gene3D" id="1.10.287.110">
    <property type="entry name" value="DnaJ domain"/>
    <property type="match status" value="1"/>
</dbReference>
<dbReference type="InterPro" id="IPR036869">
    <property type="entry name" value="J_dom_sf"/>
</dbReference>
<dbReference type="InterPro" id="IPR005341">
    <property type="entry name" value="Tim16"/>
</dbReference>
<dbReference type="PANTHER" id="PTHR12388">
    <property type="entry name" value="MITOCHONDRIA ASSOCIATED GRANULOCYTE MACROPHAGE CSF SIGNALING MOLECULE"/>
    <property type="match status" value="1"/>
</dbReference>
<dbReference type="PANTHER" id="PTHR12388:SF0">
    <property type="entry name" value="MITOCHONDRIAL IMPORT INNER MEMBRANE TRANSLOCASE SUBUNIT TIM16"/>
    <property type="match status" value="1"/>
</dbReference>
<dbReference type="Pfam" id="PF03656">
    <property type="entry name" value="Pam16"/>
    <property type="match status" value="1"/>
</dbReference>
<proteinExistence type="inferred from homology"/>
<reference key="1">
    <citation type="journal article" date="2004" name="Nature">
        <title>Genome evolution in yeasts.</title>
        <authorList>
            <person name="Dujon B."/>
            <person name="Sherman D."/>
            <person name="Fischer G."/>
            <person name="Durrens P."/>
            <person name="Casaregola S."/>
            <person name="Lafontaine I."/>
            <person name="de Montigny J."/>
            <person name="Marck C."/>
            <person name="Neuveglise C."/>
            <person name="Talla E."/>
            <person name="Goffard N."/>
            <person name="Frangeul L."/>
            <person name="Aigle M."/>
            <person name="Anthouard V."/>
            <person name="Babour A."/>
            <person name="Barbe V."/>
            <person name="Barnay S."/>
            <person name="Blanchin S."/>
            <person name="Beckerich J.-M."/>
            <person name="Beyne E."/>
            <person name="Bleykasten C."/>
            <person name="Boisrame A."/>
            <person name="Boyer J."/>
            <person name="Cattolico L."/>
            <person name="Confanioleri F."/>
            <person name="de Daruvar A."/>
            <person name="Despons L."/>
            <person name="Fabre E."/>
            <person name="Fairhead C."/>
            <person name="Ferry-Dumazet H."/>
            <person name="Groppi A."/>
            <person name="Hantraye F."/>
            <person name="Hennequin C."/>
            <person name="Jauniaux N."/>
            <person name="Joyet P."/>
            <person name="Kachouri R."/>
            <person name="Kerrest A."/>
            <person name="Koszul R."/>
            <person name="Lemaire M."/>
            <person name="Lesur I."/>
            <person name="Ma L."/>
            <person name="Muller H."/>
            <person name="Nicaud J.-M."/>
            <person name="Nikolski M."/>
            <person name="Oztas S."/>
            <person name="Ozier-Kalogeropoulos O."/>
            <person name="Pellenz S."/>
            <person name="Potier S."/>
            <person name="Richard G.-F."/>
            <person name="Straub M.-L."/>
            <person name="Suleau A."/>
            <person name="Swennen D."/>
            <person name="Tekaia F."/>
            <person name="Wesolowski-Louvel M."/>
            <person name="Westhof E."/>
            <person name="Wirth B."/>
            <person name="Zeniou-Meyer M."/>
            <person name="Zivanovic Y."/>
            <person name="Bolotin-Fukuhara M."/>
            <person name="Thierry A."/>
            <person name="Bouchier C."/>
            <person name="Caudron B."/>
            <person name="Scarpelli C."/>
            <person name="Gaillardin C."/>
            <person name="Weissenbach J."/>
            <person name="Wincker P."/>
            <person name="Souciet J.-L."/>
        </authorList>
    </citation>
    <scope>NUCLEOTIDE SEQUENCE [LARGE SCALE GENOMIC DNA]</scope>
    <source>
        <strain>ATCC 36239 / CBS 767 / BCRC 21394 / JCM 1990 / NBRC 0083 / IGC 2968</strain>
    </source>
</reference>
<gene>
    <name type="primary">PAM16</name>
    <name type="synonym">TIM16</name>
    <name type="ordered locus">DEHA2B01364g</name>
</gene>
<protein>
    <recommendedName>
        <fullName>Mitochondrial import inner membrane translocase subunit TIM16</fullName>
    </recommendedName>
    <alternativeName>
        <fullName>Presequence translocated-associated motor subunit PAM16</fullName>
    </alternativeName>
</protein>
<keyword id="KW-0472">Membrane</keyword>
<keyword id="KW-0496">Mitochondrion</keyword>
<keyword id="KW-0999">Mitochondrion inner membrane</keyword>
<keyword id="KW-0653">Protein transport</keyword>
<keyword id="KW-1185">Reference proteome</keyword>
<keyword id="KW-0811">Translocation</keyword>
<keyword id="KW-0813">Transport</keyword>